<gene>
    <name type="ORF">zgc:162255</name>
</gene>
<protein>
    <recommendedName>
        <fullName>Bombesin receptor-activated protein C6orf89 homolog</fullName>
    </recommendedName>
</protein>
<proteinExistence type="evidence at transcript level"/>
<feature type="chain" id="PRO_0000360987" description="Bombesin receptor-activated protein C6orf89 homolog">
    <location>
        <begin position="1"/>
        <end position="309"/>
    </location>
</feature>
<feature type="topological domain" description="Cytoplasmic" evidence="3">
    <location>
        <begin position="1"/>
        <end position="59"/>
    </location>
</feature>
<feature type="transmembrane region" description="Helical" evidence="2">
    <location>
        <begin position="60"/>
        <end position="80"/>
    </location>
</feature>
<feature type="topological domain" description="Extracellular" evidence="3">
    <location>
        <begin position="81"/>
        <end position="309"/>
    </location>
</feature>
<organism>
    <name type="scientific">Danio rerio</name>
    <name type="common">Zebrafish</name>
    <name type="synonym">Brachydanio rerio</name>
    <dbReference type="NCBI Taxonomy" id="7955"/>
    <lineage>
        <taxon>Eukaryota</taxon>
        <taxon>Metazoa</taxon>
        <taxon>Chordata</taxon>
        <taxon>Craniata</taxon>
        <taxon>Vertebrata</taxon>
        <taxon>Euteleostomi</taxon>
        <taxon>Actinopterygii</taxon>
        <taxon>Neopterygii</taxon>
        <taxon>Teleostei</taxon>
        <taxon>Ostariophysi</taxon>
        <taxon>Cypriniformes</taxon>
        <taxon>Danionidae</taxon>
        <taxon>Danioninae</taxon>
        <taxon>Danio</taxon>
    </lineage>
</organism>
<sequence length="309" mass="34716">MGSSLSEPCIYDKLSESIDILRQSGYRYGMSEREIEKFIKQVLETNEPRREPPQFPILRATVKFVVAVGVVLMAVLVFTYPQSPVLMGSVSGTTLNNSSPLSHIRLLELPIAEKYNLHGFHEWWASSSLQTMDLNCSACTDVTDILELTDQLRTSAGEHTRTQPLLLKGGAALSLRVSQMDQFSSVSQTPANFTLLWSVSSRPRESVLQWLFPESERCPLLEIWSSTLQRCRLSSRRPQPSRVQVLGWMVVADGSPDVRLLPVQRCRKHCRSFSLRLEPGDMVFADSQIWLMELSPSGAQDVQCDSAVL</sequence>
<evidence type="ECO:0000250" key="1">
    <source>
        <dbReference type="UniProtKB" id="Q6UWU4"/>
    </source>
</evidence>
<evidence type="ECO:0000255" key="2"/>
<evidence type="ECO:0000305" key="3"/>
<reference key="1">
    <citation type="submission" date="2007-04" db="EMBL/GenBank/DDBJ databases">
        <authorList>
            <consortium name="NIH - Zebrafish Gene Collection (ZGC) project"/>
        </authorList>
    </citation>
    <scope>NUCLEOTIDE SEQUENCE [LARGE SCALE MRNA]</scope>
    <source>
        <tissue>Ovary</tissue>
    </source>
</reference>
<keyword id="KW-0963">Cytoplasm</keyword>
<keyword id="KW-0333">Golgi apparatus</keyword>
<keyword id="KW-0472">Membrane</keyword>
<keyword id="KW-1185">Reference proteome</keyword>
<keyword id="KW-0735">Signal-anchor</keyword>
<keyword id="KW-0812">Transmembrane</keyword>
<keyword id="KW-1133">Transmembrane helix</keyword>
<comment type="function">
    <text evidence="1">Exhibits histone deacetylase (HDAC) enhancer properties. May play a role in progression through the cell cycle (By similarity).</text>
</comment>
<comment type="subunit">
    <text evidence="1">Homodimer (By similarity).</text>
</comment>
<comment type="subcellular location">
    <subcellularLocation>
        <location evidence="1">Golgi apparatus membrane</location>
        <topology evidence="1">Single-pass type II membrane protein</topology>
    </subcellularLocation>
    <subcellularLocation>
        <location evidence="1">Cytoplasm</location>
    </subcellularLocation>
</comment>
<dbReference type="EMBL" id="BC139557">
    <property type="protein sequence ID" value="AAI39558.1"/>
    <property type="molecule type" value="mRNA"/>
</dbReference>
<dbReference type="RefSeq" id="NP_001082946.1">
    <property type="nucleotide sequence ID" value="NM_001089477.1"/>
</dbReference>
<dbReference type="SMR" id="A4QNX3"/>
<dbReference type="FunCoup" id="A4QNX3">
    <property type="interactions" value="1513"/>
</dbReference>
<dbReference type="PaxDb" id="7955-ENSDARP00000096095"/>
<dbReference type="GeneID" id="100037321"/>
<dbReference type="KEGG" id="dre:100037321"/>
<dbReference type="AGR" id="ZFIN:ZDB-GENE-070410-51"/>
<dbReference type="ZFIN" id="ZDB-GENE-070410-51">
    <property type="gene designation" value="zgc:162255"/>
</dbReference>
<dbReference type="eggNOG" id="ENOG502S363">
    <property type="taxonomic scope" value="Eukaryota"/>
</dbReference>
<dbReference type="InParanoid" id="A4QNX3"/>
<dbReference type="OrthoDB" id="10036464at2759"/>
<dbReference type="PhylomeDB" id="A4QNX3"/>
<dbReference type="PRO" id="PR:A4QNX3"/>
<dbReference type="Proteomes" id="UP000000437">
    <property type="component" value="Chromosome 22"/>
</dbReference>
<dbReference type="GO" id="GO:0005737">
    <property type="term" value="C:cytoplasm"/>
    <property type="evidence" value="ECO:0000250"/>
    <property type="project" value="UniProtKB"/>
</dbReference>
<dbReference type="GO" id="GO:0000139">
    <property type="term" value="C:Golgi membrane"/>
    <property type="evidence" value="ECO:0000250"/>
    <property type="project" value="UniProtKB"/>
</dbReference>
<dbReference type="GO" id="GO:0030496">
    <property type="term" value="C:midbody"/>
    <property type="evidence" value="ECO:0000250"/>
    <property type="project" value="UniProtKB"/>
</dbReference>
<dbReference type="GO" id="GO:0005886">
    <property type="term" value="C:plasma membrane"/>
    <property type="evidence" value="ECO:0000250"/>
    <property type="project" value="UniProtKB"/>
</dbReference>
<dbReference type="GO" id="GO:0006338">
    <property type="term" value="P:chromatin remodeling"/>
    <property type="evidence" value="ECO:0000250"/>
    <property type="project" value="UniProtKB"/>
</dbReference>
<dbReference type="GO" id="GO:0050673">
    <property type="term" value="P:epithelial cell proliferation"/>
    <property type="evidence" value="ECO:0000250"/>
    <property type="project" value="UniProtKB"/>
</dbReference>
<dbReference type="GO" id="GO:0045787">
    <property type="term" value="P:positive regulation of cell cycle"/>
    <property type="evidence" value="ECO:0000250"/>
    <property type="project" value="UniProtKB"/>
</dbReference>
<dbReference type="GO" id="GO:0042060">
    <property type="term" value="P:wound healing"/>
    <property type="evidence" value="ECO:0000250"/>
    <property type="project" value="UniProtKB"/>
</dbReference>
<dbReference type="InterPro" id="IPR038757">
    <property type="entry name" value="BRAP"/>
</dbReference>
<dbReference type="PANTHER" id="PTHR35259">
    <property type="entry name" value="BOMBESIN RECEPTOR-ACTIVATED PROTEIN C6ORF89"/>
    <property type="match status" value="1"/>
</dbReference>
<dbReference type="PANTHER" id="PTHR35259:SF1">
    <property type="entry name" value="BOMBESIN RECEPTOR-ACTIVATED PROTEIN C6ORF89"/>
    <property type="match status" value="1"/>
</dbReference>
<accession>A4QNX3</accession>
<name>CF089_DANRE</name>